<keyword id="KW-0963">Cytoplasm</keyword>
<keyword id="KW-0413">Isomerase</keyword>
<keyword id="KW-0627">Porphyrin biosynthesis</keyword>
<keyword id="KW-0663">Pyridoxal phosphate</keyword>
<feature type="chain" id="PRO_1000205644" description="Glutamate-1-semialdehyde 2,1-aminomutase">
    <location>
        <begin position="1"/>
        <end position="427"/>
    </location>
</feature>
<feature type="modified residue" description="N6-(pyridoxal phosphate)lysine" evidence="1">
    <location>
        <position position="265"/>
    </location>
</feature>
<evidence type="ECO:0000255" key="1">
    <source>
        <dbReference type="HAMAP-Rule" id="MF_00375"/>
    </source>
</evidence>
<comment type="catalytic activity">
    <reaction evidence="1">
        <text>(S)-4-amino-5-oxopentanoate = 5-aminolevulinate</text>
        <dbReference type="Rhea" id="RHEA:14265"/>
        <dbReference type="ChEBI" id="CHEBI:57501"/>
        <dbReference type="ChEBI" id="CHEBI:356416"/>
        <dbReference type="EC" id="5.4.3.8"/>
    </reaction>
</comment>
<comment type="cofactor">
    <cofactor evidence="1">
        <name>pyridoxal 5'-phosphate</name>
        <dbReference type="ChEBI" id="CHEBI:597326"/>
    </cofactor>
</comment>
<comment type="pathway">
    <text evidence="1">Porphyrin-containing compound metabolism; protoporphyrin-IX biosynthesis; 5-aminolevulinate from L-glutamyl-tRNA(Glu): step 2/2.</text>
</comment>
<comment type="subunit">
    <text evidence="1">Homodimer.</text>
</comment>
<comment type="subcellular location">
    <subcellularLocation>
        <location evidence="1">Cytoplasm</location>
    </subcellularLocation>
</comment>
<comment type="similarity">
    <text evidence="1">Belongs to the class-III pyridoxal-phosphate-dependent aminotransferase family. HemL subfamily.</text>
</comment>
<proteinExistence type="inferred from homology"/>
<organism>
    <name type="scientific">Edwardsiella ictaluri (strain 93-146)</name>
    <dbReference type="NCBI Taxonomy" id="634503"/>
    <lineage>
        <taxon>Bacteria</taxon>
        <taxon>Pseudomonadati</taxon>
        <taxon>Pseudomonadota</taxon>
        <taxon>Gammaproteobacteria</taxon>
        <taxon>Enterobacterales</taxon>
        <taxon>Hafniaceae</taxon>
        <taxon>Edwardsiella</taxon>
    </lineage>
</organism>
<name>GSA_EDWI9</name>
<protein>
    <recommendedName>
        <fullName evidence="1">Glutamate-1-semialdehyde 2,1-aminomutase</fullName>
        <shortName evidence="1">GSA</shortName>
        <ecNumber evidence="1">5.4.3.8</ecNumber>
    </recommendedName>
    <alternativeName>
        <fullName evidence="1">Glutamate-1-semialdehyde aminotransferase</fullName>
        <shortName evidence="1">GSA-AT</shortName>
    </alternativeName>
</protein>
<accession>C5BAP9</accession>
<reference key="1">
    <citation type="submission" date="2009-03" db="EMBL/GenBank/DDBJ databases">
        <title>Complete genome sequence of Edwardsiella ictaluri 93-146.</title>
        <authorList>
            <person name="Williams M.L."/>
            <person name="Gillaspy A.F."/>
            <person name="Dyer D.W."/>
            <person name="Thune R.L."/>
            <person name="Waldbieser G.C."/>
            <person name="Schuster S.C."/>
            <person name="Gipson J."/>
            <person name="Zaitshik J."/>
            <person name="Landry C."/>
            <person name="Lawrence M.L."/>
        </authorList>
    </citation>
    <scope>NUCLEOTIDE SEQUENCE [LARGE SCALE GENOMIC DNA]</scope>
    <source>
        <strain>93-146</strain>
    </source>
</reference>
<dbReference type="EC" id="5.4.3.8" evidence="1"/>
<dbReference type="EMBL" id="CP001600">
    <property type="protein sequence ID" value="ACR70256.1"/>
    <property type="molecule type" value="Genomic_DNA"/>
</dbReference>
<dbReference type="RefSeq" id="WP_015872344.1">
    <property type="nucleotide sequence ID" value="NZ_CP169062.1"/>
</dbReference>
<dbReference type="SMR" id="C5BAP9"/>
<dbReference type="STRING" id="67780.B6E78_07385"/>
<dbReference type="GeneID" id="69539975"/>
<dbReference type="KEGG" id="eic:NT01EI_3106"/>
<dbReference type="PATRIC" id="fig|634503.3.peg.2768"/>
<dbReference type="HOGENOM" id="CLU_016922_1_5_6"/>
<dbReference type="OrthoDB" id="9801052at2"/>
<dbReference type="UniPathway" id="UPA00251">
    <property type="reaction ID" value="UER00317"/>
</dbReference>
<dbReference type="Proteomes" id="UP000001485">
    <property type="component" value="Chromosome"/>
</dbReference>
<dbReference type="GO" id="GO:0005737">
    <property type="term" value="C:cytoplasm"/>
    <property type="evidence" value="ECO:0007669"/>
    <property type="project" value="UniProtKB-SubCell"/>
</dbReference>
<dbReference type="GO" id="GO:0042286">
    <property type="term" value="F:glutamate-1-semialdehyde 2,1-aminomutase activity"/>
    <property type="evidence" value="ECO:0007669"/>
    <property type="project" value="UniProtKB-UniRule"/>
</dbReference>
<dbReference type="GO" id="GO:0030170">
    <property type="term" value="F:pyridoxal phosphate binding"/>
    <property type="evidence" value="ECO:0007669"/>
    <property type="project" value="InterPro"/>
</dbReference>
<dbReference type="GO" id="GO:0008483">
    <property type="term" value="F:transaminase activity"/>
    <property type="evidence" value="ECO:0007669"/>
    <property type="project" value="InterPro"/>
</dbReference>
<dbReference type="GO" id="GO:0006782">
    <property type="term" value="P:protoporphyrinogen IX biosynthetic process"/>
    <property type="evidence" value="ECO:0007669"/>
    <property type="project" value="UniProtKB-UniRule"/>
</dbReference>
<dbReference type="CDD" id="cd00610">
    <property type="entry name" value="OAT_like"/>
    <property type="match status" value="1"/>
</dbReference>
<dbReference type="FunFam" id="3.40.640.10:FF:000021">
    <property type="entry name" value="Glutamate-1-semialdehyde 2,1-aminomutase"/>
    <property type="match status" value="1"/>
</dbReference>
<dbReference type="FunFam" id="3.90.1150.10:FF:000012">
    <property type="entry name" value="Glutamate-1-semialdehyde 2,1-aminomutase"/>
    <property type="match status" value="1"/>
</dbReference>
<dbReference type="Gene3D" id="3.90.1150.10">
    <property type="entry name" value="Aspartate Aminotransferase, domain 1"/>
    <property type="match status" value="1"/>
</dbReference>
<dbReference type="Gene3D" id="3.40.640.10">
    <property type="entry name" value="Type I PLP-dependent aspartate aminotransferase-like (Major domain)"/>
    <property type="match status" value="1"/>
</dbReference>
<dbReference type="HAMAP" id="MF_00375">
    <property type="entry name" value="HemL_aminotrans_3"/>
    <property type="match status" value="1"/>
</dbReference>
<dbReference type="InterPro" id="IPR004639">
    <property type="entry name" value="4pyrrol_synth_GluAld_NH2Trfase"/>
</dbReference>
<dbReference type="InterPro" id="IPR005814">
    <property type="entry name" value="Aminotrans_3"/>
</dbReference>
<dbReference type="InterPro" id="IPR049704">
    <property type="entry name" value="Aminotrans_3_PPA_site"/>
</dbReference>
<dbReference type="InterPro" id="IPR015424">
    <property type="entry name" value="PyrdxlP-dep_Trfase"/>
</dbReference>
<dbReference type="InterPro" id="IPR015421">
    <property type="entry name" value="PyrdxlP-dep_Trfase_major"/>
</dbReference>
<dbReference type="InterPro" id="IPR015422">
    <property type="entry name" value="PyrdxlP-dep_Trfase_small"/>
</dbReference>
<dbReference type="NCBIfam" id="TIGR00713">
    <property type="entry name" value="hemL"/>
    <property type="match status" value="1"/>
</dbReference>
<dbReference type="NCBIfam" id="NF000818">
    <property type="entry name" value="PRK00062.1"/>
    <property type="match status" value="1"/>
</dbReference>
<dbReference type="PANTHER" id="PTHR43713">
    <property type="entry name" value="GLUTAMATE-1-SEMIALDEHYDE 2,1-AMINOMUTASE"/>
    <property type="match status" value="1"/>
</dbReference>
<dbReference type="PANTHER" id="PTHR43713:SF3">
    <property type="entry name" value="GLUTAMATE-1-SEMIALDEHYDE 2,1-AMINOMUTASE 1, CHLOROPLASTIC-RELATED"/>
    <property type="match status" value="1"/>
</dbReference>
<dbReference type="Pfam" id="PF00202">
    <property type="entry name" value="Aminotran_3"/>
    <property type="match status" value="1"/>
</dbReference>
<dbReference type="SUPFAM" id="SSF53383">
    <property type="entry name" value="PLP-dependent transferases"/>
    <property type="match status" value="1"/>
</dbReference>
<dbReference type="PROSITE" id="PS00600">
    <property type="entry name" value="AA_TRANSFER_CLASS_3"/>
    <property type="match status" value="1"/>
</dbReference>
<sequence length="427" mass="45865">MNKSERLYEQAKTLIPGGVNSPVRAFTGVGGTPLFIERADGAHLYDADGKAYIDYVGSWGPMILGHNHPVIRDAVIAAVGRGLSFGAPTEMEVRMAELVTSLIDSMDMVRMVNSGTEATMSAIRLARGFTGRDKLIKFEGCYHGHADHLLVKAGSGALTLGQPNSPGVPADFAKHTLTCSYNDLDSVRAAFARYPQEIACIIVEPVAGNMNCIPPQPGFLQGLRELCDQYGALLIIDEVMTGFRVALGGAQEYYDVTPDLTCLGKIIGGGMPVGAFGGRREVMEALAPTGPIYQAGTLSGNPVAMAAGYACLNEINQPGIYPQLAELTDNLAEGLLAAAREEKIPLVVNHVGGMFGIFFTDQPSVTCYQDVLRCDAERFKRFFHLMLEQGIYLAPSAFEAGFMSLAHSQEDIQKTIDAARCSFAKLK</sequence>
<gene>
    <name evidence="1" type="primary">hemL</name>
    <name type="ordered locus">NT01EI_3106</name>
</gene>